<dbReference type="EMBL" id="AY251282">
    <property type="protein sequence ID" value="AAP42416.1"/>
    <property type="molecule type" value="mRNA"/>
</dbReference>
<dbReference type="SMR" id="Q7T229"/>
<dbReference type="MEROPS" id="S01.509"/>
<dbReference type="GO" id="GO:0005576">
    <property type="term" value="C:extracellular region"/>
    <property type="evidence" value="ECO:0007669"/>
    <property type="project" value="UniProtKB-SubCell"/>
</dbReference>
<dbReference type="GO" id="GO:0030141">
    <property type="term" value="C:secretory granule"/>
    <property type="evidence" value="ECO:0007669"/>
    <property type="project" value="TreeGrafter"/>
</dbReference>
<dbReference type="GO" id="GO:0090729">
    <property type="term" value="F:toxin activity"/>
    <property type="evidence" value="ECO:0007669"/>
    <property type="project" value="UniProtKB-KW"/>
</dbReference>
<dbReference type="CDD" id="cd00190">
    <property type="entry name" value="Tryp_SPc"/>
    <property type="match status" value="1"/>
</dbReference>
<dbReference type="FunFam" id="2.40.10.10:FF:000158">
    <property type="entry name" value="Thrombin-like enzyme saxthrombin"/>
    <property type="match status" value="1"/>
</dbReference>
<dbReference type="FunFam" id="2.40.10.10:FF:000153">
    <property type="entry name" value="Venom plasminogen activator TSV-PA"/>
    <property type="match status" value="1"/>
</dbReference>
<dbReference type="Gene3D" id="2.40.10.10">
    <property type="entry name" value="Trypsin-like serine proteases"/>
    <property type="match status" value="2"/>
</dbReference>
<dbReference type="InterPro" id="IPR009003">
    <property type="entry name" value="Peptidase_S1_PA"/>
</dbReference>
<dbReference type="InterPro" id="IPR043504">
    <property type="entry name" value="Peptidase_S1_PA_chymotrypsin"/>
</dbReference>
<dbReference type="InterPro" id="IPR001314">
    <property type="entry name" value="Peptidase_S1A"/>
</dbReference>
<dbReference type="InterPro" id="IPR001254">
    <property type="entry name" value="Trypsin_dom"/>
</dbReference>
<dbReference type="InterPro" id="IPR033116">
    <property type="entry name" value="TRYPSIN_SER"/>
</dbReference>
<dbReference type="PANTHER" id="PTHR24271:SF47">
    <property type="entry name" value="KALLIKREIN-1"/>
    <property type="match status" value="1"/>
</dbReference>
<dbReference type="PANTHER" id="PTHR24271">
    <property type="entry name" value="KALLIKREIN-RELATED"/>
    <property type="match status" value="1"/>
</dbReference>
<dbReference type="Pfam" id="PF00089">
    <property type="entry name" value="Trypsin"/>
    <property type="match status" value="1"/>
</dbReference>
<dbReference type="PRINTS" id="PR00722">
    <property type="entry name" value="CHYMOTRYPSIN"/>
</dbReference>
<dbReference type="SMART" id="SM00020">
    <property type="entry name" value="Tryp_SPc"/>
    <property type="match status" value="1"/>
</dbReference>
<dbReference type="SUPFAM" id="SSF50494">
    <property type="entry name" value="Trypsin-like serine proteases"/>
    <property type="match status" value="1"/>
</dbReference>
<dbReference type="PROSITE" id="PS50240">
    <property type="entry name" value="TRYPSIN_DOM"/>
    <property type="match status" value="1"/>
</dbReference>
<dbReference type="PROSITE" id="PS00135">
    <property type="entry name" value="TRYPSIN_SER"/>
    <property type="match status" value="1"/>
</dbReference>
<organism>
    <name type="scientific">Bothrops jararacussu</name>
    <name type="common">Jararacussu</name>
    <dbReference type="NCBI Taxonomy" id="8726"/>
    <lineage>
        <taxon>Eukaryota</taxon>
        <taxon>Metazoa</taxon>
        <taxon>Chordata</taxon>
        <taxon>Craniata</taxon>
        <taxon>Vertebrata</taxon>
        <taxon>Euteleostomi</taxon>
        <taxon>Lepidosauria</taxon>
        <taxon>Squamata</taxon>
        <taxon>Bifurcata</taxon>
        <taxon>Unidentata</taxon>
        <taxon>Episquamata</taxon>
        <taxon>Toxicofera</taxon>
        <taxon>Serpentes</taxon>
        <taxon>Colubroidea</taxon>
        <taxon>Viperidae</taxon>
        <taxon>Crotalinae</taxon>
        <taxon>Bothrops</taxon>
    </lineage>
</organism>
<proteinExistence type="evidence at protein level"/>
<evidence type="ECO:0000250" key="1"/>
<evidence type="ECO:0000255" key="2"/>
<evidence type="ECO:0000255" key="3">
    <source>
        <dbReference type="PROSITE-ProRule" id="PRU00274"/>
    </source>
</evidence>
<evidence type="ECO:0000269" key="4">
    <source>
    </source>
</evidence>
<evidence type="ECO:0000305" key="5"/>
<evidence type="ECO:0000305" key="6">
    <source>
    </source>
</evidence>
<reference key="1">
    <citation type="journal article" date="2004" name="Biochimie">
        <title>Analysis of Bothrops jararacussu venomous gland transcriptome focusing on structural and functional aspects: I -- gene expression profile of highly expressed phospholipases A2.</title>
        <authorList>
            <person name="Kashima S."/>
            <person name="Roberto P.G."/>
            <person name="Soares A.M."/>
            <person name="Astolfi-Filho S."/>
            <person name="Pereira J.O."/>
            <person name="Giuliati S."/>
            <person name="Faria M. Jr."/>
            <person name="Xavier M.A.S."/>
            <person name="Fontes M.R.M."/>
            <person name="Giglio J.R."/>
            <person name="Franca S.C."/>
        </authorList>
    </citation>
    <scope>NUCLEOTIDE SEQUENCE [MRNA]</scope>
    <source>
        <tissue>Venom gland</tissue>
    </source>
</reference>
<reference key="2">
    <citation type="journal article" date="2005" name="J. Chromatogr. B">
        <title>Biochemical and molecular modeling analysis of the ability of two p-aminobenzamidine-based sorbents to selectively purify serine proteases (fibrinogenases) from snake venoms.</title>
        <authorList>
            <person name="De-Simone S.G."/>
            <person name="Correa-Netto C."/>
            <person name="Antunes O.A."/>
            <person name="De-Alencastro R.B."/>
            <person name="Silva F.P. Jr."/>
        </authorList>
    </citation>
    <scope>PROTEIN SEQUENCE OF 86-109</scope>
    <scope>SUBCELLULAR LOCATION</scope>
    <source>
        <tissue>Venom</tissue>
    </source>
</reference>
<accession>Q7T229</accession>
<comment type="function">
    <text evidence="5">Snake venom serine protease homolog that may act in the hemostasis system of the prey.</text>
</comment>
<comment type="subcellular location">
    <subcellularLocation>
        <location evidence="4">Secreted</location>
    </subcellularLocation>
</comment>
<comment type="tissue specificity">
    <text evidence="6">Expressed by the venom gland.</text>
</comment>
<comment type="similarity">
    <text evidence="5">Belongs to the peptidase S1 family. Snake venom subfamily.</text>
</comment>
<comment type="caution">
    <text evidence="5">Lacks the conserved His residue in position 67 essential for protease activity.</text>
</comment>
<sequence length="260" mass="28654">MVLIRVLANLLILQLSYAQKASELIIGGDECNINEHRFLVALYTSRSRRFHCSGTLINQEWVLTAANCDRKNIRIKLGMHSKNVTNEDEQTRVPKEKFFCLSSKTYTKWDKDIMLIRLKRPVNDSPHIAPISLPSSPPSVGSVCRIMGWGTISPTKVSYPDVPHCANINLLDYEVCRAAHGGLPATSRTLCAGILEGGKDSCQGDSGGPLICNGQFQGILSWGVHPCGQRLKPGVYTKVSDYTEWIRSIIAGNTDVTCPP</sequence>
<protein>
    <recommendedName>
        <fullName>Snake venom serine protease homolog</fullName>
    </recommendedName>
    <alternativeName>
        <fullName>Serine proteinase-like protein</fullName>
    </alternativeName>
</protein>
<keyword id="KW-0903">Direct protein sequencing</keyword>
<keyword id="KW-1015">Disulfide bond</keyword>
<keyword id="KW-0325">Glycoprotein</keyword>
<keyword id="KW-1199">Hemostasis impairing toxin</keyword>
<keyword id="KW-0964">Secreted</keyword>
<keyword id="KW-0721">Serine protease homolog</keyword>
<keyword id="KW-0732">Signal</keyword>
<keyword id="KW-0800">Toxin</keyword>
<name>VSPH_BOTJR</name>
<feature type="signal peptide" evidence="2">
    <location>
        <begin position="1"/>
        <end position="18"/>
    </location>
</feature>
<feature type="propeptide" id="PRO_0000296363" evidence="1">
    <location>
        <begin position="19"/>
        <end position="24"/>
    </location>
</feature>
<feature type="chain" id="PRO_0000296364" description="Snake venom serine protease homolog">
    <location>
        <begin position="25"/>
        <end position="260"/>
    </location>
</feature>
<feature type="domain" description="Peptidase S1" evidence="3">
    <location>
        <begin position="25"/>
        <end position="251"/>
    </location>
</feature>
<feature type="glycosylation site" description="N-linked (GlcNAc...) asparagine" evidence="2">
    <location>
        <position position="83"/>
    </location>
</feature>
<feature type="disulfide bond" evidence="3">
    <location>
        <begin position="31"/>
        <end position="165"/>
    </location>
</feature>
<feature type="disulfide bond" evidence="3">
    <location>
        <begin position="52"/>
        <end position="68"/>
    </location>
</feature>
<feature type="disulfide bond" evidence="3">
    <location>
        <begin position="100"/>
        <end position="258"/>
    </location>
</feature>
<feature type="disulfide bond" evidence="3">
    <location>
        <begin position="144"/>
        <end position="212"/>
    </location>
</feature>
<feature type="disulfide bond" evidence="3">
    <location>
        <begin position="176"/>
        <end position="191"/>
    </location>
</feature>
<feature type="disulfide bond" evidence="3">
    <location>
        <begin position="202"/>
        <end position="227"/>
    </location>
</feature>
<feature type="sequence conflict" description="In Ref. 2; AA sequence." evidence="5" ref="2">
    <location>
        <position position="99"/>
    </location>
</feature>